<accession>B5QVV6</accession>
<proteinExistence type="inferred from homology"/>
<sequence length="480" mass="54889">MTLSFTARWRDELPATYTALLPTPLKNARLIWYNDKLAQQLAIPASLFDATNGAGVWGGETLLPGMSPVAQVYSGHQFGVWAGQLGDGRGILLGEQLLAYGSTLDWHLKGAGLTPYSRMGDGRAVLRSTIRESLASEAMHYLGIPTTRALSIVASDTPVQRETQETGAMLMRLAQSHMRFGHFEHFYYRREPEKVQQLADFAIRHYWPQWQDVPEKYALWFEEVAARTGRLIAEWQTVGFSHGVMNTDNMSILGLTIDYGPFGFLDDYDPGFIGNHSDHQGRYRFDNQPLVALWNLQRLAQTLTPFIEIDALNRALDRYQDALLTHYGQRMRQKLGFFTEQKDDNALLNELFSLMAREGSDYTRTFRMLSHTEQQSASSPLRDTFIDRAAFDAWFDRYRARLRTEAVDDALRQQQMQRVNPAVVLRNWLAQRAIDAAEQGDMAELHRLHEVLRQPFTDRDDDYASRPPEWGKRLEVSCSS</sequence>
<dbReference type="EC" id="2.7.7.-" evidence="1"/>
<dbReference type="EC" id="2.7.7.108" evidence="1"/>
<dbReference type="EMBL" id="AM933172">
    <property type="protein sequence ID" value="CAR33281.1"/>
    <property type="molecule type" value="Genomic_DNA"/>
</dbReference>
<dbReference type="RefSeq" id="WP_000175686.1">
    <property type="nucleotide sequence ID" value="NC_011294.1"/>
</dbReference>
<dbReference type="SMR" id="B5QVV6"/>
<dbReference type="KEGG" id="set:SEN1699"/>
<dbReference type="HOGENOM" id="CLU_010245_4_0_6"/>
<dbReference type="Proteomes" id="UP000000613">
    <property type="component" value="Chromosome"/>
</dbReference>
<dbReference type="GO" id="GO:0070733">
    <property type="term" value="F:AMPylase activity"/>
    <property type="evidence" value="ECO:0007669"/>
    <property type="project" value="RHEA"/>
</dbReference>
<dbReference type="GO" id="GO:0005524">
    <property type="term" value="F:ATP binding"/>
    <property type="evidence" value="ECO:0007669"/>
    <property type="project" value="UniProtKB-UniRule"/>
</dbReference>
<dbReference type="GO" id="GO:0000287">
    <property type="term" value="F:magnesium ion binding"/>
    <property type="evidence" value="ECO:0007669"/>
    <property type="project" value="UniProtKB-UniRule"/>
</dbReference>
<dbReference type="HAMAP" id="MF_00692">
    <property type="entry name" value="YdiU_SelO"/>
    <property type="match status" value="1"/>
</dbReference>
<dbReference type="InterPro" id="IPR054838">
    <property type="entry name" value="adnlytase_SelO"/>
</dbReference>
<dbReference type="InterPro" id="IPR003846">
    <property type="entry name" value="SelO"/>
</dbReference>
<dbReference type="NCBIfam" id="NF040880">
    <property type="entry name" value="adnlytase_SelO"/>
    <property type="match status" value="1"/>
</dbReference>
<dbReference type="NCBIfam" id="NF000658">
    <property type="entry name" value="PRK00029.1"/>
    <property type="match status" value="1"/>
</dbReference>
<dbReference type="PANTHER" id="PTHR32057">
    <property type="entry name" value="PROTEIN ADENYLYLTRANSFERASE SELO, MITOCHONDRIAL"/>
    <property type="match status" value="1"/>
</dbReference>
<dbReference type="PANTHER" id="PTHR32057:SF14">
    <property type="entry name" value="PROTEIN ADENYLYLTRANSFERASE SELO, MITOCHONDRIAL"/>
    <property type="match status" value="1"/>
</dbReference>
<dbReference type="Pfam" id="PF02696">
    <property type="entry name" value="SelO"/>
    <property type="match status" value="1"/>
</dbReference>
<organism>
    <name type="scientific">Salmonella enteritidis PT4 (strain P125109)</name>
    <dbReference type="NCBI Taxonomy" id="550537"/>
    <lineage>
        <taxon>Bacteria</taxon>
        <taxon>Pseudomonadati</taxon>
        <taxon>Pseudomonadota</taxon>
        <taxon>Gammaproteobacteria</taxon>
        <taxon>Enterobacterales</taxon>
        <taxon>Enterobacteriaceae</taxon>
        <taxon>Salmonella</taxon>
    </lineage>
</organism>
<protein>
    <recommendedName>
        <fullName evidence="1">Protein nucleotidyltransferase YdiU</fullName>
        <ecNumber evidence="1">2.7.7.-</ecNumber>
    </recommendedName>
    <alternativeName>
        <fullName evidence="1">Protein adenylyltransferase YdiU</fullName>
        <ecNumber evidence="1">2.7.7.108</ecNumber>
    </alternativeName>
    <alternativeName>
        <fullName evidence="1">Protein uridylyltransferase YdiU</fullName>
        <ecNumber evidence="1">2.7.7.-</ecNumber>
    </alternativeName>
</protein>
<feature type="chain" id="PRO_1000132124" description="Protein nucleotidyltransferase YdiU">
    <location>
        <begin position="1"/>
        <end position="480"/>
    </location>
</feature>
<feature type="active site" description="Proton acceptor" evidence="1">
    <location>
        <position position="248"/>
    </location>
</feature>
<feature type="binding site" evidence="1">
    <location>
        <position position="86"/>
    </location>
    <ligand>
        <name>ATP</name>
        <dbReference type="ChEBI" id="CHEBI:30616"/>
    </ligand>
</feature>
<feature type="binding site" evidence="1">
    <location>
        <position position="88"/>
    </location>
    <ligand>
        <name>ATP</name>
        <dbReference type="ChEBI" id="CHEBI:30616"/>
    </ligand>
</feature>
<feature type="binding site" evidence="1">
    <location>
        <position position="89"/>
    </location>
    <ligand>
        <name>ATP</name>
        <dbReference type="ChEBI" id="CHEBI:30616"/>
    </ligand>
</feature>
<feature type="binding site" evidence="1">
    <location>
        <position position="109"/>
    </location>
    <ligand>
        <name>ATP</name>
        <dbReference type="ChEBI" id="CHEBI:30616"/>
    </ligand>
</feature>
<feature type="binding site" evidence="1">
    <location>
        <position position="121"/>
    </location>
    <ligand>
        <name>ATP</name>
        <dbReference type="ChEBI" id="CHEBI:30616"/>
    </ligand>
</feature>
<feature type="binding site" evidence="1">
    <location>
        <position position="122"/>
    </location>
    <ligand>
        <name>ATP</name>
        <dbReference type="ChEBI" id="CHEBI:30616"/>
    </ligand>
</feature>
<feature type="binding site" evidence="1">
    <location>
        <position position="172"/>
    </location>
    <ligand>
        <name>ATP</name>
        <dbReference type="ChEBI" id="CHEBI:30616"/>
    </ligand>
</feature>
<feature type="binding site" evidence="1">
    <location>
        <position position="179"/>
    </location>
    <ligand>
        <name>ATP</name>
        <dbReference type="ChEBI" id="CHEBI:30616"/>
    </ligand>
</feature>
<feature type="binding site" evidence="1">
    <location>
        <position position="249"/>
    </location>
    <ligand>
        <name>Mg(2+)</name>
        <dbReference type="ChEBI" id="CHEBI:18420"/>
    </ligand>
</feature>
<feature type="binding site" evidence="1">
    <location>
        <position position="258"/>
    </location>
    <ligand>
        <name>ATP</name>
        <dbReference type="ChEBI" id="CHEBI:30616"/>
    </ligand>
</feature>
<feature type="binding site" evidence="1">
    <location>
        <position position="258"/>
    </location>
    <ligand>
        <name>Mg(2+)</name>
        <dbReference type="ChEBI" id="CHEBI:18420"/>
    </ligand>
</feature>
<evidence type="ECO:0000255" key="1">
    <source>
        <dbReference type="HAMAP-Rule" id="MF_00692"/>
    </source>
</evidence>
<gene>
    <name evidence="1" type="primary">ydiU</name>
    <name evidence="1" type="synonym">selO</name>
    <name type="ordered locus">SEN1699</name>
</gene>
<keyword id="KW-0067">ATP-binding</keyword>
<keyword id="KW-0460">Magnesium</keyword>
<keyword id="KW-0464">Manganese</keyword>
<keyword id="KW-0479">Metal-binding</keyword>
<keyword id="KW-0547">Nucleotide-binding</keyword>
<keyword id="KW-0548">Nucleotidyltransferase</keyword>
<keyword id="KW-0808">Transferase</keyword>
<reference key="1">
    <citation type="journal article" date="2008" name="Genome Res.">
        <title>Comparative genome analysis of Salmonella enteritidis PT4 and Salmonella gallinarum 287/91 provides insights into evolutionary and host adaptation pathways.</title>
        <authorList>
            <person name="Thomson N.R."/>
            <person name="Clayton D.J."/>
            <person name="Windhorst D."/>
            <person name="Vernikos G."/>
            <person name="Davidson S."/>
            <person name="Churcher C."/>
            <person name="Quail M.A."/>
            <person name="Stevens M."/>
            <person name="Jones M.A."/>
            <person name="Watson M."/>
            <person name="Barron A."/>
            <person name="Layton A."/>
            <person name="Pickard D."/>
            <person name="Kingsley R.A."/>
            <person name="Bignell A."/>
            <person name="Clark L."/>
            <person name="Harris B."/>
            <person name="Ormond D."/>
            <person name="Abdellah Z."/>
            <person name="Brooks K."/>
            <person name="Cherevach I."/>
            <person name="Chillingworth T."/>
            <person name="Woodward J."/>
            <person name="Norberczak H."/>
            <person name="Lord A."/>
            <person name="Arrowsmith C."/>
            <person name="Jagels K."/>
            <person name="Moule S."/>
            <person name="Mungall K."/>
            <person name="Saunders M."/>
            <person name="Whitehead S."/>
            <person name="Chabalgoity J.A."/>
            <person name="Maskell D."/>
            <person name="Humphreys T."/>
            <person name="Roberts M."/>
            <person name="Barrow P.A."/>
            <person name="Dougan G."/>
            <person name="Parkhill J."/>
        </authorList>
    </citation>
    <scope>NUCLEOTIDE SEQUENCE [LARGE SCALE GENOMIC DNA]</scope>
    <source>
        <strain>P125109</strain>
    </source>
</reference>
<comment type="function">
    <text evidence="1">Nucleotidyltransferase involved in the post-translational modification of proteins. It can catalyze the addition of adenosine monophosphate (AMP) or uridine monophosphate (UMP) to a protein, resulting in modifications known as AMPylation and UMPylation.</text>
</comment>
<comment type="catalytic activity">
    <reaction evidence="1">
        <text>L-seryl-[protein] + ATP = 3-O-(5'-adenylyl)-L-seryl-[protein] + diphosphate</text>
        <dbReference type="Rhea" id="RHEA:58120"/>
        <dbReference type="Rhea" id="RHEA-COMP:9863"/>
        <dbReference type="Rhea" id="RHEA-COMP:15073"/>
        <dbReference type="ChEBI" id="CHEBI:29999"/>
        <dbReference type="ChEBI" id="CHEBI:30616"/>
        <dbReference type="ChEBI" id="CHEBI:33019"/>
        <dbReference type="ChEBI" id="CHEBI:142516"/>
        <dbReference type="EC" id="2.7.7.108"/>
    </reaction>
</comment>
<comment type="catalytic activity">
    <reaction evidence="1">
        <text>L-threonyl-[protein] + ATP = 3-O-(5'-adenylyl)-L-threonyl-[protein] + diphosphate</text>
        <dbReference type="Rhea" id="RHEA:54292"/>
        <dbReference type="Rhea" id="RHEA-COMP:11060"/>
        <dbReference type="Rhea" id="RHEA-COMP:13847"/>
        <dbReference type="ChEBI" id="CHEBI:30013"/>
        <dbReference type="ChEBI" id="CHEBI:30616"/>
        <dbReference type="ChEBI" id="CHEBI:33019"/>
        <dbReference type="ChEBI" id="CHEBI:138113"/>
        <dbReference type="EC" id="2.7.7.108"/>
    </reaction>
</comment>
<comment type="catalytic activity">
    <reaction evidence="1">
        <text>L-tyrosyl-[protein] + ATP = O-(5'-adenylyl)-L-tyrosyl-[protein] + diphosphate</text>
        <dbReference type="Rhea" id="RHEA:54288"/>
        <dbReference type="Rhea" id="RHEA-COMP:10136"/>
        <dbReference type="Rhea" id="RHEA-COMP:13846"/>
        <dbReference type="ChEBI" id="CHEBI:30616"/>
        <dbReference type="ChEBI" id="CHEBI:33019"/>
        <dbReference type="ChEBI" id="CHEBI:46858"/>
        <dbReference type="ChEBI" id="CHEBI:83624"/>
        <dbReference type="EC" id="2.7.7.108"/>
    </reaction>
</comment>
<comment type="catalytic activity">
    <reaction evidence="1">
        <text>L-histidyl-[protein] + UTP = N(tele)-(5'-uridylyl)-L-histidyl-[protein] + diphosphate</text>
        <dbReference type="Rhea" id="RHEA:83891"/>
        <dbReference type="Rhea" id="RHEA-COMP:9745"/>
        <dbReference type="Rhea" id="RHEA-COMP:20239"/>
        <dbReference type="ChEBI" id="CHEBI:29979"/>
        <dbReference type="ChEBI" id="CHEBI:33019"/>
        <dbReference type="ChEBI" id="CHEBI:46398"/>
        <dbReference type="ChEBI" id="CHEBI:233474"/>
    </reaction>
</comment>
<comment type="catalytic activity">
    <reaction evidence="1">
        <text>L-seryl-[protein] + UTP = O-(5'-uridylyl)-L-seryl-[protein] + diphosphate</text>
        <dbReference type="Rhea" id="RHEA:64604"/>
        <dbReference type="Rhea" id="RHEA-COMP:9863"/>
        <dbReference type="Rhea" id="RHEA-COMP:16635"/>
        <dbReference type="ChEBI" id="CHEBI:29999"/>
        <dbReference type="ChEBI" id="CHEBI:33019"/>
        <dbReference type="ChEBI" id="CHEBI:46398"/>
        <dbReference type="ChEBI" id="CHEBI:156051"/>
    </reaction>
</comment>
<comment type="catalytic activity">
    <reaction evidence="1">
        <text>L-tyrosyl-[protein] + UTP = O-(5'-uridylyl)-L-tyrosyl-[protein] + diphosphate</text>
        <dbReference type="Rhea" id="RHEA:83887"/>
        <dbReference type="Rhea" id="RHEA-COMP:10136"/>
        <dbReference type="Rhea" id="RHEA-COMP:20238"/>
        <dbReference type="ChEBI" id="CHEBI:33019"/>
        <dbReference type="ChEBI" id="CHEBI:46398"/>
        <dbReference type="ChEBI" id="CHEBI:46858"/>
        <dbReference type="ChEBI" id="CHEBI:90602"/>
    </reaction>
</comment>
<comment type="cofactor">
    <cofactor evidence="1">
        <name>Mg(2+)</name>
        <dbReference type="ChEBI" id="CHEBI:18420"/>
    </cofactor>
    <cofactor evidence="1">
        <name>Mn(2+)</name>
        <dbReference type="ChEBI" id="CHEBI:29035"/>
    </cofactor>
</comment>
<comment type="similarity">
    <text evidence="1">Belongs to the SELO family.</text>
</comment>
<name>SELO_SALEP</name>